<keyword id="KW-0963">Cytoplasm</keyword>
<keyword id="KW-0413">Isomerase</keyword>
<keyword id="KW-0464">Manganese</keyword>
<keyword id="KW-0479">Metal-binding</keyword>
<protein>
    <recommendedName>
        <fullName evidence="1">Phosphopentomutase</fullName>
        <ecNumber evidence="1">5.4.2.7</ecNumber>
    </recommendedName>
    <alternativeName>
        <fullName evidence="1">Phosphodeoxyribomutase</fullName>
    </alternativeName>
</protein>
<sequence>MKRTFIMVLDSFGIGASADAKKFGDEGADTLGHIAEACARGEANVGRSGPLTLPNLSRLGLGKAAEESTGTFPVGLDKNADIIGAYGYASELSSGKDTPSGHWEIAGVPVLFDWGYFSDVENSFPQELLDKLVKRANLPGYLGNCHSSGTVILDQLGEEHMKTGKPIFYTSADSVFQIACHEETFGLDRLYELCEIAREELTDGGYNIGRVIARPFIGDKPGHFQRTGNRHDLAVEPPAPTMLKKLVDEKGGEVVSIGKIADIYAQVGITQKVKATGLDALFDATIEEMKKAGDNTIVFTNFVDFDSSYGHRRDVAGYAAALELFDRRLPELMALVKEDDILILTADHGCDPTWPGTDHTREHIPVLVYGPKVKPGSLGHRETFADIGQTVAAYFGLSPMDYGKNML</sequence>
<accession>B1JL35</accession>
<evidence type="ECO:0000255" key="1">
    <source>
        <dbReference type="HAMAP-Rule" id="MF_00740"/>
    </source>
</evidence>
<reference key="1">
    <citation type="submission" date="2008-02" db="EMBL/GenBank/DDBJ databases">
        <title>Complete sequence of Yersinia pseudotuberculosis YPIII.</title>
        <authorList>
            <consortium name="US DOE Joint Genome Institute"/>
            <person name="Copeland A."/>
            <person name="Lucas S."/>
            <person name="Lapidus A."/>
            <person name="Glavina del Rio T."/>
            <person name="Dalin E."/>
            <person name="Tice H."/>
            <person name="Bruce D."/>
            <person name="Goodwin L."/>
            <person name="Pitluck S."/>
            <person name="Munk A.C."/>
            <person name="Brettin T."/>
            <person name="Detter J.C."/>
            <person name="Han C."/>
            <person name="Tapia R."/>
            <person name="Schmutz J."/>
            <person name="Larimer F."/>
            <person name="Land M."/>
            <person name="Hauser L."/>
            <person name="Challacombe J.F."/>
            <person name="Green L."/>
            <person name="Lindler L.E."/>
            <person name="Nikolich M.P."/>
            <person name="Richardson P."/>
        </authorList>
    </citation>
    <scope>NUCLEOTIDE SEQUENCE [LARGE SCALE GENOMIC DNA]</scope>
    <source>
        <strain>YPIII</strain>
    </source>
</reference>
<name>DEOB_YERPY</name>
<proteinExistence type="inferred from homology"/>
<gene>
    <name evidence="1" type="primary">deoB</name>
    <name type="ordered locus">YPK_3625</name>
</gene>
<dbReference type="EC" id="5.4.2.7" evidence="1"/>
<dbReference type="EMBL" id="CP000950">
    <property type="protein sequence ID" value="ACA69892.1"/>
    <property type="molecule type" value="Genomic_DNA"/>
</dbReference>
<dbReference type="RefSeq" id="WP_011191688.1">
    <property type="nucleotide sequence ID" value="NZ_CP009792.1"/>
</dbReference>
<dbReference type="SMR" id="B1JL35"/>
<dbReference type="GeneID" id="49787417"/>
<dbReference type="KEGG" id="ypy:YPK_3625"/>
<dbReference type="PATRIC" id="fig|502800.11.peg.4377"/>
<dbReference type="UniPathway" id="UPA00002">
    <property type="reaction ID" value="UER00467"/>
</dbReference>
<dbReference type="GO" id="GO:0005829">
    <property type="term" value="C:cytosol"/>
    <property type="evidence" value="ECO:0007669"/>
    <property type="project" value="TreeGrafter"/>
</dbReference>
<dbReference type="GO" id="GO:0000287">
    <property type="term" value="F:magnesium ion binding"/>
    <property type="evidence" value="ECO:0007669"/>
    <property type="project" value="InterPro"/>
</dbReference>
<dbReference type="GO" id="GO:0030145">
    <property type="term" value="F:manganese ion binding"/>
    <property type="evidence" value="ECO:0007669"/>
    <property type="project" value="UniProtKB-UniRule"/>
</dbReference>
<dbReference type="GO" id="GO:0008973">
    <property type="term" value="F:phosphopentomutase activity"/>
    <property type="evidence" value="ECO:0007669"/>
    <property type="project" value="UniProtKB-UniRule"/>
</dbReference>
<dbReference type="GO" id="GO:0006018">
    <property type="term" value="P:2-deoxyribose 1-phosphate catabolic process"/>
    <property type="evidence" value="ECO:0007669"/>
    <property type="project" value="UniProtKB-UniRule"/>
</dbReference>
<dbReference type="GO" id="GO:0006015">
    <property type="term" value="P:5-phosphoribose 1-diphosphate biosynthetic process"/>
    <property type="evidence" value="ECO:0007669"/>
    <property type="project" value="UniProtKB-UniPathway"/>
</dbReference>
<dbReference type="GO" id="GO:0043094">
    <property type="term" value="P:metabolic compound salvage"/>
    <property type="evidence" value="ECO:0007669"/>
    <property type="project" value="InterPro"/>
</dbReference>
<dbReference type="GO" id="GO:0009117">
    <property type="term" value="P:nucleotide metabolic process"/>
    <property type="evidence" value="ECO:0007669"/>
    <property type="project" value="InterPro"/>
</dbReference>
<dbReference type="CDD" id="cd16009">
    <property type="entry name" value="PPM"/>
    <property type="match status" value="1"/>
</dbReference>
<dbReference type="FunFam" id="3.30.70.1250:FF:000001">
    <property type="entry name" value="Phosphopentomutase"/>
    <property type="match status" value="1"/>
</dbReference>
<dbReference type="Gene3D" id="3.40.720.10">
    <property type="entry name" value="Alkaline Phosphatase, subunit A"/>
    <property type="match status" value="1"/>
</dbReference>
<dbReference type="Gene3D" id="3.30.70.1250">
    <property type="entry name" value="Phosphopentomutase"/>
    <property type="match status" value="1"/>
</dbReference>
<dbReference type="HAMAP" id="MF_00740">
    <property type="entry name" value="Phosphopentomut"/>
    <property type="match status" value="1"/>
</dbReference>
<dbReference type="InterPro" id="IPR017850">
    <property type="entry name" value="Alkaline_phosphatase_core_sf"/>
</dbReference>
<dbReference type="InterPro" id="IPR010045">
    <property type="entry name" value="DeoB"/>
</dbReference>
<dbReference type="InterPro" id="IPR006124">
    <property type="entry name" value="Metalloenzyme"/>
</dbReference>
<dbReference type="InterPro" id="IPR024052">
    <property type="entry name" value="Phosphopentomutase_DeoB_cap_sf"/>
</dbReference>
<dbReference type="NCBIfam" id="TIGR01696">
    <property type="entry name" value="deoB"/>
    <property type="match status" value="1"/>
</dbReference>
<dbReference type="NCBIfam" id="NF003766">
    <property type="entry name" value="PRK05362.1"/>
    <property type="match status" value="1"/>
</dbReference>
<dbReference type="PANTHER" id="PTHR21110">
    <property type="entry name" value="PHOSPHOPENTOMUTASE"/>
    <property type="match status" value="1"/>
</dbReference>
<dbReference type="PANTHER" id="PTHR21110:SF0">
    <property type="entry name" value="PHOSPHOPENTOMUTASE"/>
    <property type="match status" value="1"/>
</dbReference>
<dbReference type="Pfam" id="PF01676">
    <property type="entry name" value="Metalloenzyme"/>
    <property type="match status" value="1"/>
</dbReference>
<dbReference type="PIRSF" id="PIRSF001491">
    <property type="entry name" value="Ppentomutase"/>
    <property type="match status" value="1"/>
</dbReference>
<dbReference type="SUPFAM" id="SSF53649">
    <property type="entry name" value="Alkaline phosphatase-like"/>
    <property type="match status" value="1"/>
</dbReference>
<dbReference type="SUPFAM" id="SSF143856">
    <property type="entry name" value="DeoB insert domain-like"/>
    <property type="match status" value="1"/>
</dbReference>
<organism>
    <name type="scientific">Yersinia pseudotuberculosis serotype O:3 (strain YPIII)</name>
    <dbReference type="NCBI Taxonomy" id="502800"/>
    <lineage>
        <taxon>Bacteria</taxon>
        <taxon>Pseudomonadati</taxon>
        <taxon>Pseudomonadota</taxon>
        <taxon>Gammaproteobacteria</taxon>
        <taxon>Enterobacterales</taxon>
        <taxon>Yersiniaceae</taxon>
        <taxon>Yersinia</taxon>
    </lineage>
</organism>
<feature type="chain" id="PRO_1000189777" description="Phosphopentomutase">
    <location>
        <begin position="1"/>
        <end position="407"/>
    </location>
</feature>
<feature type="binding site" evidence="1">
    <location>
        <position position="10"/>
    </location>
    <ligand>
        <name>Mn(2+)</name>
        <dbReference type="ChEBI" id="CHEBI:29035"/>
        <label>1</label>
    </ligand>
</feature>
<feature type="binding site" evidence="1">
    <location>
        <position position="306"/>
    </location>
    <ligand>
        <name>Mn(2+)</name>
        <dbReference type="ChEBI" id="CHEBI:29035"/>
        <label>2</label>
    </ligand>
</feature>
<feature type="binding site" evidence="1">
    <location>
        <position position="311"/>
    </location>
    <ligand>
        <name>Mn(2+)</name>
        <dbReference type="ChEBI" id="CHEBI:29035"/>
        <label>2</label>
    </ligand>
</feature>
<feature type="binding site" evidence="1">
    <location>
        <position position="347"/>
    </location>
    <ligand>
        <name>Mn(2+)</name>
        <dbReference type="ChEBI" id="CHEBI:29035"/>
        <label>1</label>
    </ligand>
</feature>
<feature type="binding site" evidence="1">
    <location>
        <position position="348"/>
    </location>
    <ligand>
        <name>Mn(2+)</name>
        <dbReference type="ChEBI" id="CHEBI:29035"/>
        <label>1</label>
    </ligand>
</feature>
<feature type="binding site" evidence="1">
    <location>
        <position position="359"/>
    </location>
    <ligand>
        <name>Mn(2+)</name>
        <dbReference type="ChEBI" id="CHEBI:29035"/>
        <label>2</label>
    </ligand>
</feature>
<comment type="function">
    <text evidence="1">Isomerase that catalyzes the conversion of deoxy-ribose 1-phosphate (dRib-1-P) and ribose 1-phosphate (Rib-1-P) to deoxy-ribose 5-phosphate (dRib-5-P) and ribose 5-phosphate (Rib-5-P), respectively.</text>
</comment>
<comment type="catalytic activity">
    <reaction evidence="1">
        <text>2-deoxy-alpha-D-ribose 1-phosphate = 2-deoxy-D-ribose 5-phosphate</text>
        <dbReference type="Rhea" id="RHEA:27658"/>
        <dbReference type="ChEBI" id="CHEBI:57259"/>
        <dbReference type="ChEBI" id="CHEBI:62877"/>
        <dbReference type="EC" id="5.4.2.7"/>
    </reaction>
</comment>
<comment type="catalytic activity">
    <reaction evidence="1">
        <text>alpha-D-ribose 1-phosphate = D-ribose 5-phosphate</text>
        <dbReference type="Rhea" id="RHEA:18793"/>
        <dbReference type="ChEBI" id="CHEBI:57720"/>
        <dbReference type="ChEBI" id="CHEBI:78346"/>
        <dbReference type="EC" id="5.4.2.7"/>
    </reaction>
</comment>
<comment type="cofactor">
    <cofactor evidence="1">
        <name>Mn(2+)</name>
        <dbReference type="ChEBI" id="CHEBI:29035"/>
    </cofactor>
    <text evidence="1">Binds 2 manganese ions.</text>
</comment>
<comment type="pathway">
    <text evidence="1">Carbohydrate degradation; 2-deoxy-D-ribose 1-phosphate degradation; D-glyceraldehyde 3-phosphate and acetaldehyde from 2-deoxy-alpha-D-ribose 1-phosphate: step 1/2.</text>
</comment>
<comment type="subcellular location">
    <subcellularLocation>
        <location evidence="1">Cytoplasm</location>
    </subcellularLocation>
</comment>
<comment type="similarity">
    <text evidence="1">Belongs to the phosphopentomutase family.</text>
</comment>